<keyword id="KW-0131">Cell cycle</keyword>
<keyword id="KW-0132">Cell division</keyword>
<keyword id="KW-0963">Cytoplasm</keyword>
<keyword id="KW-0206">Cytoskeleton</keyword>
<keyword id="KW-0472">Membrane</keyword>
<keyword id="KW-0496">Mitochondrion</keyword>
<keyword id="KW-0498">Mitosis</keyword>
<keyword id="KW-1185">Reference proteome</keyword>
<keyword id="KW-0732">Signal</keyword>
<keyword id="KW-0812">Transmembrane</keyword>
<keyword id="KW-1133">Transmembrane helix</keyword>
<organism>
    <name type="scientific">Brugia malayi</name>
    <name type="common">Filarial nematode worm</name>
    <dbReference type="NCBI Taxonomy" id="6279"/>
    <lineage>
        <taxon>Eukaryota</taxon>
        <taxon>Metazoa</taxon>
        <taxon>Ecdysozoa</taxon>
        <taxon>Nematoda</taxon>
        <taxon>Chromadorea</taxon>
        <taxon>Rhabditida</taxon>
        <taxon>Spirurina</taxon>
        <taxon>Spiruromorpha</taxon>
        <taxon>Filarioidea</taxon>
        <taxon>Onchocercidae</taxon>
        <taxon>Brugia</taxon>
    </lineage>
</organism>
<gene>
    <name type="primary">JTB</name>
</gene>
<reference key="1">
    <citation type="journal article" date="1999" name="Oncogene">
        <title>JTB: a novel membrane protein gene at 1q21 rearranged in a jumping translocation.</title>
        <authorList>
            <person name="Hatakeyama S."/>
            <person name="Osawa M."/>
            <person name="Omine M."/>
            <person name="Ishikawa F."/>
        </authorList>
    </citation>
    <scope>NUCLEOTIDE SEQUENCE [MRNA]</scope>
</reference>
<comment type="function">
    <text evidence="1">Required for normal cytokinesis during mitosis. Plays a role in the regulation of cell proliferation. May be a component of the chromosomal passenger complex (CPC), a complex that acts as a key regulator of mitosis. The CPC complex has essential functions at the centromere in ensuring correct chromosome alignment and segregation and is required for chromatin-induced microtubule stabilization and spindle assembly (By similarity).</text>
</comment>
<comment type="subcellular location">
    <subcellularLocation>
        <location evidence="3">Membrane</location>
        <topology evidence="3">Single-pass type I membrane protein</topology>
    </subcellularLocation>
    <subcellularLocation>
        <location evidence="1">Mitochondrion</location>
    </subcellularLocation>
    <subcellularLocation>
        <location evidence="1">Cytoplasm</location>
    </subcellularLocation>
    <subcellularLocation>
        <location evidence="1">Cytoplasm</location>
        <location evidence="1">Cytoskeleton</location>
        <location evidence="1">Microtubule organizing center</location>
        <location evidence="1">Centrosome</location>
    </subcellularLocation>
    <subcellularLocation>
        <location evidence="1">Cytoplasm</location>
        <location evidence="1">Cytoskeleton</location>
        <location evidence="1">Spindle</location>
    </subcellularLocation>
    <text evidence="1">Detected at the centrosome and along spindle fibers during prophase and metaphase. Detected at the midbody during telophase (By similarity).</text>
</comment>
<comment type="similarity">
    <text evidence="3">Belongs to the JTB family.</text>
</comment>
<dbReference type="EMBL" id="AB016491">
    <property type="protein sequence ID" value="BAA33734.1"/>
    <property type="molecule type" value="mRNA"/>
</dbReference>
<dbReference type="SMR" id="O77049"/>
<dbReference type="FunCoup" id="O77049">
    <property type="interactions" value="1113"/>
</dbReference>
<dbReference type="InParanoid" id="O77049"/>
<dbReference type="Proteomes" id="UP000006672">
    <property type="component" value="Unassembled WGS sequence"/>
</dbReference>
<dbReference type="GO" id="GO:0005813">
    <property type="term" value="C:centrosome"/>
    <property type="evidence" value="ECO:0007669"/>
    <property type="project" value="UniProtKB-SubCell"/>
</dbReference>
<dbReference type="GO" id="GO:0005737">
    <property type="term" value="C:cytoplasm"/>
    <property type="evidence" value="ECO:0000250"/>
    <property type="project" value="UniProtKB"/>
</dbReference>
<dbReference type="GO" id="GO:0016020">
    <property type="term" value="C:membrane"/>
    <property type="evidence" value="ECO:0007669"/>
    <property type="project" value="UniProtKB-SubCell"/>
</dbReference>
<dbReference type="GO" id="GO:0030496">
    <property type="term" value="C:midbody"/>
    <property type="evidence" value="ECO:0000250"/>
    <property type="project" value="UniProtKB"/>
</dbReference>
<dbReference type="GO" id="GO:0005739">
    <property type="term" value="C:mitochondrion"/>
    <property type="evidence" value="ECO:0007669"/>
    <property type="project" value="UniProtKB-SubCell"/>
</dbReference>
<dbReference type="GO" id="GO:0005819">
    <property type="term" value="C:spindle"/>
    <property type="evidence" value="ECO:0007669"/>
    <property type="project" value="UniProtKB-SubCell"/>
</dbReference>
<dbReference type="GO" id="GO:0019901">
    <property type="term" value="F:protein kinase binding"/>
    <property type="evidence" value="ECO:0000250"/>
    <property type="project" value="UniProtKB"/>
</dbReference>
<dbReference type="GO" id="GO:0000278">
    <property type="term" value="P:mitotic cell cycle"/>
    <property type="evidence" value="ECO:0000250"/>
    <property type="project" value="UniProtKB"/>
</dbReference>
<dbReference type="GO" id="GO:0000281">
    <property type="term" value="P:mitotic cytokinesis"/>
    <property type="evidence" value="ECO:0000250"/>
    <property type="project" value="UniProtKB"/>
</dbReference>
<dbReference type="GO" id="GO:0045860">
    <property type="term" value="P:positive regulation of protein kinase activity"/>
    <property type="evidence" value="ECO:0000250"/>
    <property type="project" value="UniProtKB"/>
</dbReference>
<dbReference type="FunFam" id="3.30.720.220:FF:000001">
    <property type="entry name" value="Jumping translocation breakpoint"/>
    <property type="match status" value="1"/>
</dbReference>
<dbReference type="Gene3D" id="3.30.720.220">
    <property type="match status" value="1"/>
</dbReference>
<dbReference type="InterPro" id="IPR008657">
    <property type="entry name" value="JTB"/>
</dbReference>
<dbReference type="PANTHER" id="PTHR13041">
    <property type="entry name" value="JTB PROTEIN-RELATED"/>
    <property type="match status" value="1"/>
</dbReference>
<dbReference type="PANTHER" id="PTHR13041:SF3">
    <property type="entry name" value="PROTEIN JTB"/>
    <property type="match status" value="1"/>
</dbReference>
<dbReference type="Pfam" id="PF05439">
    <property type="entry name" value="JTB"/>
    <property type="match status" value="1"/>
</dbReference>
<proteinExistence type="evidence at transcript level"/>
<accession>O77049</accession>
<name>JTB_BRUMA</name>
<sequence>MLAGARRLGLPRGGHLCWLLCAFTLKLCEAEAPVREEKLSVSTSTSPCWLVEEFVVTEECAPCSNFQIKSTPECGSTGYMEKITCSPSKRNEFRSCRSALMERHLFWKFEGTVVAVALVFACLVIIRQRQLDRKALEKVRKQIESI</sequence>
<evidence type="ECO:0000250" key="1"/>
<evidence type="ECO:0000255" key="2"/>
<evidence type="ECO:0000305" key="3"/>
<feature type="signal peptide" evidence="2">
    <location>
        <begin position="1"/>
        <end position="30"/>
    </location>
</feature>
<feature type="chain" id="PRO_0000021534" description="Protein JTB">
    <location>
        <begin position="31"/>
        <end position="146"/>
    </location>
</feature>
<feature type="topological domain" description="Extracellular" evidence="2">
    <location>
        <begin position="31"/>
        <end position="105"/>
    </location>
</feature>
<feature type="transmembrane region" description="Helical" evidence="2">
    <location>
        <begin position="106"/>
        <end position="126"/>
    </location>
</feature>
<feature type="topological domain" description="Cytoplasmic" evidence="2">
    <location>
        <begin position="127"/>
        <end position="146"/>
    </location>
</feature>
<protein>
    <recommendedName>
        <fullName>Protein JTB</fullName>
    </recommendedName>
</protein>